<protein>
    <recommendedName>
        <fullName evidence="1">UDP-3-O-acyl-N-acetylglucosamine deacetylase</fullName>
        <shortName evidence="1">UDP-3-O-acyl-GlcNAc deacetylase</shortName>
        <ecNumber evidence="1">3.5.1.108</ecNumber>
    </recommendedName>
    <alternativeName>
        <fullName evidence="1">UDP-3-O-[R-3-hydroxymyristoyl]-N-acetylglucosamine deacetylase</fullName>
    </alternativeName>
</protein>
<keyword id="KW-0378">Hydrolase</keyword>
<keyword id="KW-0441">Lipid A biosynthesis</keyword>
<keyword id="KW-0444">Lipid biosynthesis</keyword>
<keyword id="KW-0443">Lipid metabolism</keyword>
<keyword id="KW-0479">Metal-binding</keyword>
<keyword id="KW-1185">Reference proteome</keyword>
<keyword id="KW-0862">Zinc</keyword>
<reference key="1">
    <citation type="journal article" date="2009" name="J. Bacteriol.">
        <title>Complete genome sequence and comparative genome analysis of enteropathogenic Escherichia coli O127:H6 strain E2348/69.</title>
        <authorList>
            <person name="Iguchi A."/>
            <person name="Thomson N.R."/>
            <person name="Ogura Y."/>
            <person name="Saunders D."/>
            <person name="Ooka T."/>
            <person name="Henderson I.R."/>
            <person name="Harris D."/>
            <person name="Asadulghani M."/>
            <person name="Kurokawa K."/>
            <person name="Dean P."/>
            <person name="Kenny B."/>
            <person name="Quail M.A."/>
            <person name="Thurston S."/>
            <person name="Dougan G."/>
            <person name="Hayashi T."/>
            <person name="Parkhill J."/>
            <person name="Frankel G."/>
        </authorList>
    </citation>
    <scope>NUCLEOTIDE SEQUENCE [LARGE SCALE GENOMIC DNA]</scope>
    <source>
        <strain>E2348/69 / EPEC</strain>
    </source>
</reference>
<accession>B7UIE6</accession>
<proteinExistence type="inferred from homology"/>
<evidence type="ECO:0000255" key="1">
    <source>
        <dbReference type="HAMAP-Rule" id="MF_00388"/>
    </source>
</evidence>
<gene>
    <name evidence="1" type="primary">lpxC</name>
    <name type="ordered locus">E2348C_0101</name>
</gene>
<feature type="chain" id="PRO_1000134395" description="UDP-3-O-acyl-N-acetylglucosamine deacetylase">
    <location>
        <begin position="1"/>
        <end position="305"/>
    </location>
</feature>
<feature type="active site" description="Proton donor" evidence="1">
    <location>
        <position position="265"/>
    </location>
</feature>
<feature type="binding site" evidence="1">
    <location>
        <position position="79"/>
    </location>
    <ligand>
        <name>Zn(2+)</name>
        <dbReference type="ChEBI" id="CHEBI:29105"/>
    </ligand>
</feature>
<feature type="binding site" evidence="1">
    <location>
        <position position="238"/>
    </location>
    <ligand>
        <name>Zn(2+)</name>
        <dbReference type="ChEBI" id="CHEBI:29105"/>
    </ligand>
</feature>
<feature type="binding site" evidence="1">
    <location>
        <position position="242"/>
    </location>
    <ligand>
        <name>Zn(2+)</name>
        <dbReference type="ChEBI" id="CHEBI:29105"/>
    </ligand>
</feature>
<dbReference type="EC" id="3.5.1.108" evidence="1"/>
<dbReference type="EMBL" id="FM180568">
    <property type="protein sequence ID" value="CAS07649.1"/>
    <property type="molecule type" value="Genomic_DNA"/>
</dbReference>
<dbReference type="RefSeq" id="WP_000595482.1">
    <property type="nucleotide sequence ID" value="NC_011601.1"/>
</dbReference>
<dbReference type="SMR" id="B7UIE6"/>
<dbReference type="GeneID" id="93777338"/>
<dbReference type="KEGG" id="ecg:E2348C_0101"/>
<dbReference type="HOGENOM" id="CLU_046528_1_0_6"/>
<dbReference type="UniPathway" id="UPA00359">
    <property type="reaction ID" value="UER00478"/>
</dbReference>
<dbReference type="Proteomes" id="UP000008205">
    <property type="component" value="Chromosome"/>
</dbReference>
<dbReference type="GO" id="GO:0016020">
    <property type="term" value="C:membrane"/>
    <property type="evidence" value="ECO:0007669"/>
    <property type="project" value="GOC"/>
</dbReference>
<dbReference type="GO" id="GO:0046872">
    <property type="term" value="F:metal ion binding"/>
    <property type="evidence" value="ECO:0007669"/>
    <property type="project" value="UniProtKB-KW"/>
</dbReference>
<dbReference type="GO" id="GO:0103117">
    <property type="term" value="F:UDP-3-O-acyl-N-acetylglucosamine deacetylase activity"/>
    <property type="evidence" value="ECO:0007669"/>
    <property type="project" value="UniProtKB-UniRule"/>
</dbReference>
<dbReference type="GO" id="GO:0009245">
    <property type="term" value="P:lipid A biosynthetic process"/>
    <property type="evidence" value="ECO:0007669"/>
    <property type="project" value="UniProtKB-UniRule"/>
</dbReference>
<dbReference type="FunFam" id="3.30.1700.10:FF:000001">
    <property type="entry name" value="UDP-3-O-acyl-N-acetylglucosamine deacetylase"/>
    <property type="match status" value="1"/>
</dbReference>
<dbReference type="FunFam" id="3.30.230.20:FF:000001">
    <property type="entry name" value="UDP-3-O-acyl-N-acetylglucosamine deacetylase"/>
    <property type="match status" value="1"/>
</dbReference>
<dbReference type="Gene3D" id="3.30.230.20">
    <property type="entry name" value="lpxc deacetylase, domain 1"/>
    <property type="match status" value="1"/>
</dbReference>
<dbReference type="Gene3D" id="3.30.1700.10">
    <property type="entry name" value="lpxc deacetylase, domain 2"/>
    <property type="match status" value="1"/>
</dbReference>
<dbReference type="HAMAP" id="MF_00388">
    <property type="entry name" value="LpxC"/>
    <property type="match status" value="1"/>
</dbReference>
<dbReference type="InterPro" id="IPR020568">
    <property type="entry name" value="Ribosomal_Su5_D2-typ_SF"/>
</dbReference>
<dbReference type="InterPro" id="IPR004463">
    <property type="entry name" value="UDP-acyl_GlcNac_deAcase"/>
</dbReference>
<dbReference type="InterPro" id="IPR011334">
    <property type="entry name" value="UDP-acyl_GlcNac_deAcase_C"/>
</dbReference>
<dbReference type="InterPro" id="IPR015870">
    <property type="entry name" value="UDP-acyl_N-AcGlcN_deAcase_N"/>
</dbReference>
<dbReference type="NCBIfam" id="TIGR00325">
    <property type="entry name" value="lpxC"/>
    <property type="match status" value="1"/>
</dbReference>
<dbReference type="PANTHER" id="PTHR33694">
    <property type="entry name" value="UDP-3-O-ACYL-N-ACETYLGLUCOSAMINE DEACETYLASE 1, MITOCHONDRIAL-RELATED"/>
    <property type="match status" value="1"/>
</dbReference>
<dbReference type="PANTHER" id="PTHR33694:SF1">
    <property type="entry name" value="UDP-3-O-ACYL-N-ACETYLGLUCOSAMINE DEACETYLASE 1, MITOCHONDRIAL-RELATED"/>
    <property type="match status" value="1"/>
</dbReference>
<dbReference type="Pfam" id="PF03331">
    <property type="entry name" value="LpxC"/>
    <property type="match status" value="1"/>
</dbReference>
<dbReference type="SUPFAM" id="SSF54211">
    <property type="entry name" value="Ribosomal protein S5 domain 2-like"/>
    <property type="match status" value="2"/>
</dbReference>
<sequence length="305" mass="33956">MIKQRTLKRIVQATGVGLHTGKKVTLTLRPAPANTGVIYRRTDLNPPVDFPADAKSVRDTMLCTCLVNEHDVRISTVEHLNAALAGLGIDNIVIEVNAPEIPIMDGSAAPFVYLLLDAGIDELNCAKKFVRIKETVRVEDGDKWAEFKPYNGFSLDFTIDFNHPAIDSSNQRYAMNFSADAFMRQISRARTFGFMRDIEYLQSRGLCLGGSFDCAIVVDDYRVLNEDGLRFEDEFVRHKMLDAIGDLFMCGHNIIGAFTAYKSGHALNNKLLQAVLAKQEAWEYVTFQDDAELPLAFKAPSAVLA</sequence>
<comment type="function">
    <text evidence="1">Catalyzes the hydrolysis of UDP-3-O-myristoyl-N-acetylglucosamine to form UDP-3-O-myristoylglucosamine and acetate, the committed step in lipid A biosynthesis.</text>
</comment>
<comment type="catalytic activity">
    <reaction evidence="1">
        <text>a UDP-3-O-[(3R)-3-hydroxyacyl]-N-acetyl-alpha-D-glucosamine + H2O = a UDP-3-O-[(3R)-3-hydroxyacyl]-alpha-D-glucosamine + acetate</text>
        <dbReference type="Rhea" id="RHEA:67816"/>
        <dbReference type="ChEBI" id="CHEBI:15377"/>
        <dbReference type="ChEBI" id="CHEBI:30089"/>
        <dbReference type="ChEBI" id="CHEBI:137740"/>
        <dbReference type="ChEBI" id="CHEBI:173225"/>
        <dbReference type="EC" id="3.5.1.108"/>
    </reaction>
</comment>
<comment type="cofactor">
    <cofactor evidence="1">
        <name>Zn(2+)</name>
        <dbReference type="ChEBI" id="CHEBI:29105"/>
    </cofactor>
</comment>
<comment type="pathway">
    <text evidence="1">Glycolipid biosynthesis; lipid IV(A) biosynthesis; lipid IV(A) from (3R)-3-hydroxytetradecanoyl-[acyl-carrier-protein] and UDP-N-acetyl-alpha-D-glucosamine: step 2/6.</text>
</comment>
<comment type="similarity">
    <text evidence="1">Belongs to the LpxC family.</text>
</comment>
<organism>
    <name type="scientific">Escherichia coli O127:H6 (strain E2348/69 / EPEC)</name>
    <dbReference type="NCBI Taxonomy" id="574521"/>
    <lineage>
        <taxon>Bacteria</taxon>
        <taxon>Pseudomonadati</taxon>
        <taxon>Pseudomonadota</taxon>
        <taxon>Gammaproteobacteria</taxon>
        <taxon>Enterobacterales</taxon>
        <taxon>Enterobacteriaceae</taxon>
        <taxon>Escherichia</taxon>
    </lineage>
</organism>
<name>LPXC_ECO27</name>